<accession>P72302</accession>
<sequence>MARIDSAVSSSQVYADGESSSARYTRTLSGARSALFTLLIAIALVFTVEVIVRWSWPDTVAYFADPMRPAWTTVAVFFLAMLGVDALFGREHKAALLIAPLAVVPAFISQQKQVFLSDPLYPTDFLFGRQIMELMPVLVKDRPWTAVGVVAGLIAAIVVGALLLRFAWQNFPKLTRRERLMRIAFALPLLVAFWNIMDYNQFSWIRDRLRVIPIMWDQTENYRHNGFALAFAINLPMANVNAPAGYMADAIDRIPVKPLPAGTTHRGKPDVIVLMSESFWDPTRLPKVKLTPDPMPTIRELQGGNVFSPEFGGMTANVEFEALTGFSNAFLPYGSIPYQQYIRNPIPSLATFFRGEGYVSRAIHPFQGWFWNRTAVYKAFGFDMFRSEENMPAMQKRGIFASDESLTKEIIRQADEVEDPFFFFAVTLQGHGPYEANRYAKNTIKVEGDLPEADRQVLATYAQGVKEADDSLKMLMDWAKERDRETIIVLFGDHLPPLNTVYSSTGYMKGITAERKGPKDQMKAEHETPLVVWSNKTGPKKNIGTISPAFLSYQILKQAGYEHPYYTGFLGKVYDHYRVLDRYMLIRKNGKDVADWLRQPKVPASLRDYRFLQHDMMFGKRYSTERFFKSHAELYSAGL</sequence>
<reference key="1">
    <citation type="journal article" date="1999" name="J. Bacteriol.">
        <title>Cloning, sequencing, and characterization of the cgmB gene of Sinorhizobium meliloti involved in cyclic beta-glucan biosynthesis.</title>
        <authorList>
            <person name="Wang P."/>
            <person name="Ingram-Smith C."/>
            <person name="Hadley J.A."/>
            <person name="Miller K.J."/>
        </authorList>
    </citation>
    <scope>NUCLEOTIDE SEQUENCE [GENOMIC DNA]</scope>
    <source>
        <strain>1021</strain>
    </source>
</reference>
<reference key="2">
    <citation type="journal article" date="2001" name="Proc. Natl. Acad. Sci. U.S.A.">
        <title>Analysis of the chromosome sequence of the legume symbiont Sinorhizobium meliloti strain 1021.</title>
        <authorList>
            <person name="Capela D."/>
            <person name="Barloy-Hubler F."/>
            <person name="Gouzy J."/>
            <person name="Bothe G."/>
            <person name="Ampe F."/>
            <person name="Batut J."/>
            <person name="Boistard P."/>
            <person name="Becker A."/>
            <person name="Boutry M."/>
            <person name="Cadieu E."/>
            <person name="Dreano S."/>
            <person name="Gloux S."/>
            <person name="Godrie T."/>
            <person name="Goffeau A."/>
            <person name="Kahn D."/>
            <person name="Kiss E."/>
            <person name="Lelaure V."/>
            <person name="Masuy D."/>
            <person name="Pohl T."/>
            <person name="Portetelle D."/>
            <person name="Puehler A."/>
            <person name="Purnelle B."/>
            <person name="Ramsperger U."/>
            <person name="Renard C."/>
            <person name="Thebault P."/>
            <person name="Vandenbol M."/>
            <person name="Weidner S."/>
            <person name="Galibert F."/>
        </authorList>
    </citation>
    <scope>NUCLEOTIDE SEQUENCE [LARGE SCALE GENOMIC DNA]</scope>
    <source>
        <strain>1021</strain>
    </source>
</reference>
<reference key="3">
    <citation type="journal article" date="2001" name="Science">
        <title>The composite genome of the legume symbiont Sinorhizobium meliloti.</title>
        <authorList>
            <person name="Galibert F."/>
            <person name="Finan T.M."/>
            <person name="Long S.R."/>
            <person name="Puehler A."/>
            <person name="Abola P."/>
            <person name="Ampe F."/>
            <person name="Barloy-Hubler F."/>
            <person name="Barnett M.J."/>
            <person name="Becker A."/>
            <person name="Boistard P."/>
            <person name="Bothe G."/>
            <person name="Boutry M."/>
            <person name="Bowser L."/>
            <person name="Buhrmester J."/>
            <person name="Cadieu E."/>
            <person name="Capela D."/>
            <person name="Chain P."/>
            <person name="Cowie A."/>
            <person name="Davis R.W."/>
            <person name="Dreano S."/>
            <person name="Federspiel N.A."/>
            <person name="Fisher R.F."/>
            <person name="Gloux S."/>
            <person name="Godrie T."/>
            <person name="Goffeau A."/>
            <person name="Golding B."/>
            <person name="Gouzy J."/>
            <person name="Gurjal M."/>
            <person name="Hernandez-Lucas I."/>
            <person name="Hong A."/>
            <person name="Huizar L."/>
            <person name="Hyman R.W."/>
            <person name="Jones T."/>
            <person name="Kahn D."/>
            <person name="Kahn M.L."/>
            <person name="Kalman S."/>
            <person name="Keating D.H."/>
            <person name="Kiss E."/>
            <person name="Komp C."/>
            <person name="Lelaure V."/>
            <person name="Masuy D."/>
            <person name="Palm C."/>
            <person name="Peck M.C."/>
            <person name="Pohl T.M."/>
            <person name="Portetelle D."/>
            <person name="Purnelle B."/>
            <person name="Ramsperger U."/>
            <person name="Surzycki R."/>
            <person name="Thebault P."/>
            <person name="Vandenbol M."/>
            <person name="Vorhoelter F.J."/>
            <person name="Weidner S."/>
            <person name="Wells D.H."/>
            <person name="Wong K."/>
            <person name="Yeh K.-C."/>
            <person name="Batut J."/>
        </authorList>
    </citation>
    <scope>NUCLEOTIDE SEQUENCE [LARGE SCALE GENOMIC DNA]</scope>
    <source>
        <strain>1021</strain>
    </source>
</reference>
<proteinExistence type="predicted"/>
<keyword id="KW-1003">Cell membrane</keyword>
<keyword id="KW-0472">Membrane</keyword>
<keyword id="KW-1185">Reference proteome</keyword>
<keyword id="KW-0812">Transmembrane</keyword>
<keyword id="KW-1133">Transmembrane helix</keyword>
<evidence type="ECO:0000255" key="1"/>
<evidence type="ECO:0000305" key="2"/>
<name>CGMA_RHIME</name>
<dbReference type="EMBL" id="U67998">
    <property type="protein sequence ID" value="AAB41532.1"/>
    <property type="status" value="ALT_INIT"/>
    <property type="molecule type" value="Genomic_DNA"/>
</dbReference>
<dbReference type="EMBL" id="AL591688">
    <property type="protein sequence ID" value="CAC46427.1"/>
    <property type="molecule type" value="Genomic_DNA"/>
</dbReference>
<dbReference type="RefSeq" id="NP_385954.1">
    <property type="nucleotide sequence ID" value="NC_003047.1"/>
</dbReference>
<dbReference type="RefSeq" id="WP_003534093.1">
    <property type="nucleotide sequence ID" value="NC_003047.1"/>
</dbReference>
<dbReference type="SMR" id="P72302"/>
<dbReference type="EnsemblBacteria" id="CAC46427">
    <property type="protein sequence ID" value="CAC46427"/>
    <property type="gene ID" value="SMc00195"/>
</dbReference>
<dbReference type="KEGG" id="sme:SMc00195"/>
<dbReference type="PATRIC" id="fig|266834.11.peg.3290"/>
<dbReference type="eggNOG" id="COG1368">
    <property type="taxonomic scope" value="Bacteria"/>
</dbReference>
<dbReference type="HOGENOM" id="CLU_014385_3_2_5"/>
<dbReference type="OrthoDB" id="5363296at2"/>
<dbReference type="Proteomes" id="UP000001976">
    <property type="component" value="Chromosome"/>
</dbReference>
<dbReference type="GO" id="GO:0005886">
    <property type="term" value="C:plasma membrane"/>
    <property type="evidence" value="ECO:0007669"/>
    <property type="project" value="UniProtKB-SubCell"/>
</dbReference>
<dbReference type="CDD" id="cd16015">
    <property type="entry name" value="LTA_synthase"/>
    <property type="match status" value="1"/>
</dbReference>
<dbReference type="Gene3D" id="3.40.720.10">
    <property type="entry name" value="Alkaline Phosphatase, subunit A"/>
    <property type="match status" value="1"/>
</dbReference>
<dbReference type="InterPro" id="IPR017850">
    <property type="entry name" value="Alkaline_phosphatase_core_sf"/>
</dbReference>
<dbReference type="InterPro" id="IPR050448">
    <property type="entry name" value="OpgB/LTA_synthase_biosynth"/>
</dbReference>
<dbReference type="InterPro" id="IPR000917">
    <property type="entry name" value="Sulfatase_N"/>
</dbReference>
<dbReference type="PANTHER" id="PTHR47371">
    <property type="entry name" value="LIPOTEICHOIC ACID SYNTHASE"/>
    <property type="match status" value="1"/>
</dbReference>
<dbReference type="PANTHER" id="PTHR47371:SF3">
    <property type="entry name" value="PHOSPHOGLYCEROL TRANSFERASE I"/>
    <property type="match status" value="1"/>
</dbReference>
<dbReference type="Pfam" id="PF00884">
    <property type="entry name" value="Sulfatase"/>
    <property type="match status" value="1"/>
</dbReference>
<dbReference type="SUPFAM" id="SSF53649">
    <property type="entry name" value="Alkaline phosphatase-like"/>
    <property type="match status" value="1"/>
</dbReference>
<protein>
    <recommendedName>
        <fullName>Putative cyclic beta-1,2-glucan modification protein</fullName>
    </recommendedName>
</protein>
<comment type="subcellular location">
    <subcellularLocation>
        <location evidence="2">Cell membrane</location>
        <topology evidence="2">Multi-pass membrane protein</topology>
    </subcellularLocation>
</comment>
<comment type="caution">
    <text evidence="2">PubMed:10419956 reported that this protein is not expressed and that the protein that transfers sn-1 phosphoglycerol substituents to the cyclic beta-1,2-glucan backbone is CgmB. CgmB is encoded on the opposite strand from cgmA and completely overlaps it.</text>
</comment>
<comment type="caution">
    <text evidence="2">It is uncertain whether Met-1 or Val-52 is the initiator.</text>
</comment>
<comment type="sequence caution" evidence="2">
    <conflict type="erroneous initiation">
        <sequence resource="EMBL-CDS" id="AAB41532"/>
    </conflict>
</comment>
<gene>
    <name type="primary">cgmA</name>
    <name type="ordered locus">R01848</name>
    <name type="ORF">SMc00195</name>
</gene>
<organism>
    <name type="scientific">Rhizobium meliloti (strain 1021)</name>
    <name type="common">Ensifer meliloti</name>
    <name type="synonym">Sinorhizobium meliloti</name>
    <dbReference type="NCBI Taxonomy" id="266834"/>
    <lineage>
        <taxon>Bacteria</taxon>
        <taxon>Pseudomonadati</taxon>
        <taxon>Pseudomonadota</taxon>
        <taxon>Alphaproteobacteria</taxon>
        <taxon>Hyphomicrobiales</taxon>
        <taxon>Rhizobiaceae</taxon>
        <taxon>Sinorhizobium/Ensifer group</taxon>
        <taxon>Sinorhizobium</taxon>
    </lineage>
</organism>
<feature type="chain" id="PRO_0000089603" description="Putative cyclic beta-1,2-glucan modification protein">
    <location>
        <begin position="1"/>
        <end position="639"/>
    </location>
</feature>
<feature type="transmembrane region" description="Helical" evidence="1">
    <location>
        <begin position="34"/>
        <end position="54"/>
    </location>
</feature>
<feature type="transmembrane region" description="Helical" evidence="1">
    <location>
        <begin position="69"/>
        <end position="89"/>
    </location>
</feature>
<feature type="transmembrane region" description="Helical" evidence="1">
    <location>
        <begin position="96"/>
        <end position="116"/>
    </location>
</feature>
<feature type="transmembrane region" description="Helical" evidence="1">
    <location>
        <begin position="144"/>
        <end position="164"/>
    </location>
</feature>
<feature type="transmembrane region" description="Helical" evidence="1">
    <location>
        <begin position="185"/>
        <end position="205"/>
    </location>
</feature>
<feature type="transmembrane region" description="Helical" evidence="1">
    <location>
        <begin position="227"/>
        <end position="247"/>
    </location>
</feature>